<sequence>MTILCSCAQQQQQQQQDTEVITSSERTTYNFNVDWKFIKSNPKQAQDINYNDATWETISCPHTFNDVDTFDDLSHGHHDGEDNQWRGTVWYRKHFKLPKDDKGKKVFIEFESVRQIADVYINGVHLGQNQTGFIPFGFDLTPHLKFGEENIIAVKVNNDRGDHFRENFPLVWNHEHWHPTHGGIYRNVFLHTMDPLHITLPLYDNLETVGTYVYAENISEKSADITVETEIQNEHAENKNITLVTQIVDNDGAVVAHSNKNVAIPSGQKMKVTTVTNIQNPQLWYTRYPYMYKVVSAIKESNKVIDTYESPLGIRNFDFNKDSGFWINGEQIKLHGWGQKPTNAWAGLGAALPDWLRDFTFKLMDEAGGNFIRWGHCAASPAEVDMGDKYGFVTLMPGVSGESEDEGETWDIRYKAFKDLIVYYRNHPSIFIWEGGNWAESEAHYKEILEAIKTFDPKGKRLMGNRRADVKNDSEGYVSIEIGTEGWEREYPDLPIIESEYNREEAPRRIWDKNSPDDNFYNHPNISKNTYKLSSEEFAVRQADHWWNKMGKKAYHSGGANWIFSDGPHGGRCPTEVTRASGEVDAVRLPKEAFYALKAMWRPEPQVHIVGHWNYEVGTKKTMYVMSNCASVKLYVNDKLVGTNSNPENGYVFKFDNVAWESGKIKAEGFIDDALKTTQTKETTGEPAALKLTSITGPEGWLADGSDVALIDVEVVDAQGRRCPLAKGRVDFTISGPAIWRGGYNSGKPNSTNNLFLDIEAGINRVAVRSVLESGTVTIMAKKPGFKDVSVTLKSLPIDFNNGLTTTLPQVYTNVLTKEPLPEHIPEMPEYIPGVKNRSELFRKFSYTGDGKAMLRTNMHWGKKAYTDLEYNYTVLPRYLNESEYVRTPNSDNRYWARDQLQFIAGKKMHIYVLHDDTVPRPEFLLRDYEDTGDNVNVVGASMSVFHRVAEEGESIIMAGNSDGDAPENCRMYTVMVKEFK</sequence>
<gene>
    <name type="ORF">BN863_22060</name>
</gene>
<keyword id="KW-0002">3D-structure</keyword>
<keyword id="KW-0326">Glycosidase</keyword>
<keyword id="KW-0378">Hydrolase</keyword>
<keyword id="KW-0460">Magnesium</keyword>
<keyword id="KW-0479">Metal-binding</keyword>
<keyword id="KW-0574">Periplasm</keyword>
<keyword id="KW-1185">Reference proteome</keyword>
<comment type="function">
    <text evidence="1 4">Beta-glucuronidase involved in ulvan degradation (PubMed:31285597). Ulvan is the main polysaccharide component of the Ulvales (green seaweed) cell wall. It is composed of disaccharide building blocks comprising 3-sulfated rhamnose (Rha3S) linked to D-glucuronic acid (GlcA), L-iduronic acid (IduA), or D-xylose (Xyl) (Probable). Beta-glucuronidase removes GlcA side chains present on some O2 residues of Rha3S. Can remove the GlcA side chains from polymeric ulvan or from smaller oligomers (PubMed:31285597).</text>
</comment>
<comment type="catalytic activity">
    <reaction evidence="1">
        <text>a beta-D-glucuronoside + H2O = D-glucuronate + an alcohol</text>
        <dbReference type="Rhea" id="RHEA:17633"/>
        <dbReference type="ChEBI" id="CHEBI:15377"/>
        <dbReference type="ChEBI" id="CHEBI:30879"/>
        <dbReference type="ChEBI" id="CHEBI:58720"/>
        <dbReference type="ChEBI" id="CHEBI:83411"/>
        <dbReference type="EC" id="3.2.1.31"/>
    </reaction>
</comment>
<comment type="subcellular location">
    <subcellularLocation>
        <location evidence="4">Periplasm</location>
    </subcellularLocation>
</comment>
<comment type="induction">
    <text evidence="1">By ulvan and rhamnose.</text>
</comment>
<comment type="similarity">
    <text evidence="3">Belongs to the glycosyl hydrolase 2 family.</text>
</comment>
<proteinExistence type="evidence at protein level"/>
<evidence type="ECO:0000269" key="1">
    <source>
    </source>
</evidence>
<evidence type="ECO:0000303" key="2">
    <source>
    </source>
</evidence>
<evidence type="ECO:0000305" key="3"/>
<evidence type="ECO:0000305" key="4">
    <source>
    </source>
</evidence>
<evidence type="ECO:0007829" key="5">
    <source>
        <dbReference type="PDB" id="6HPD"/>
    </source>
</evidence>
<dbReference type="EC" id="3.2.1.31" evidence="1"/>
<dbReference type="EMBL" id="HG315671">
    <property type="protein sequence ID" value="CDF79918.1"/>
    <property type="molecule type" value="Genomic_DNA"/>
</dbReference>
<dbReference type="PDB" id="6HPD">
    <property type="method" value="X-ray"/>
    <property type="resolution" value="2.43 A"/>
    <property type="chains" value="A=19-981"/>
</dbReference>
<dbReference type="PDBsum" id="6HPD"/>
<dbReference type="SMR" id="T2KN75"/>
<dbReference type="STRING" id="1347342.BN863_22060"/>
<dbReference type="PATRIC" id="fig|1347342.6.peg.2213"/>
<dbReference type="eggNOG" id="COG3250">
    <property type="taxonomic scope" value="Bacteria"/>
</dbReference>
<dbReference type="HOGENOM" id="CLU_006501_3_0_10"/>
<dbReference type="Proteomes" id="UP000016160">
    <property type="component" value="Chromosome"/>
</dbReference>
<dbReference type="GO" id="GO:0042597">
    <property type="term" value="C:periplasmic space"/>
    <property type="evidence" value="ECO:0007669"/>
    <property type="project" value="UniProtKB-SubCell"/>
</dbReference>
<dbReference type="GO" id="GO:0004566">
    <property type="term" value="F:beta-glucuronidase activity"/>
    <property type="evidence" value="ECO:0007669"/>
    <property type="project" value="UniProtKB-EC"/>
</dbReference>
<dbReference type="GO" id="GO:0046872">
    <property type="term" value="F:metal ion binding"/>
    <property type="evidence" value="ECO:0007669"/>
    <property type="project" value="UniProtKB-KW"/>
</dbReference>
<dbReference type="GO" id="GO:0005975">
    <property type="term" value="P:carbohydrate metabolic process"/>
    <property type="evidence" value="ECO:0007669"/>
    <property type="project" value="InterPro"/>
</dbReference>
<dbReference type="Gene3D" id="2.60.120.260">
    <property type="entry name" value="Galactose-binding domain-like"/>
    <property type="match status" value="1"/>
</dbReference>
<dbReference type="Gene3D" id="3.20.20.80">
    <property type="entry name" value="Glycosidases"/>
    <property type="match status" value="1"/>
</dbReference>
<dbReference type="Gene3D" id="2.60.40.10">
    <property type="entry name" value="Immunoglobulins"/>
    <property type="match status" value="3"/>
</dbReference>
<dbReference type="InterPro" id="IPR036156">
    <property type="entry name" value="Beta-gal/glucu_dom_sf"/>
</dbReference>
<dbReference type="InterPro" id="IPR032311">
    <property type="entry name" value="DUF4982"/>
</dbReference>
<dbReference type="InterPro" id="IPR008979">
    <property type="entry name" value="Galactose-bd-like_sf"/>
</dbReference>
<dbReference type="InterPro" id="IPR051913">
    <property type="entry name" value="GH2_Domain-Containing"/>
</dbReference>
<dbReference type="InterPro" id="IPR040605">
    <property type="entry name" value="Glyco_hydro2_dom5"/>
</dbReference>
<dbReference type="InterPro" id="IPR006103">
    <property type="entry name" value="Glyco_hydro_2_cat"/>
</dbReference>
<dbReference type="InterPro" id="IPR006102">
    <property type="entry name" value="Glyco_hydro_2_Ig-like"/>
</dbReference>
<dbReference type="InterPro" id="IPR006104">
    <property type="entry name" value="Glyco_hydro_2_N"/>
</dbReference>
<dbReference type="InterPro" id="IPR017853">
    <property type="entry name" value="Glycoside_hydrolase_SF"/>
</dbReference>
<dbReference type="InterPro" id="IPR013783">
    <property type="entry name" value="Ig-like_fold"/>
</dbReference>
<dbReference type="PANTHER" id="PTHR42732">
    <property type="entry name" value="BETA-GALACTOSIDASE"/>
    <property type="match status" value="1"/>
</dbReference>
<dbReference type="PANTHER" id="PTHR42732:SF1">
    <property type="entry name" value="BETA-MANNOSIDASE"/>
    <property type="match status" value="1"/>
</dbReference>
<dbReference type="Pfam" id="PF16355">
    <property type="entry name" value="DUF4982"/>
    <property type="match status" value="1"/>
</dbReference>
<dbReference type="Pfam" id="PF18565">
    <property type="entry name" value="Glyco_hydro2_C5"/>
    <property type="match status" value="1"/>
</dbReference>
<dbReference type="Pfam" id="PF00703">
    <property type="entry name" value="Glyco_hydro_2"/>
    <property type="match status" value="1"/>
</dbReference>
<dbReference type="Pfam" id="PF02836">
    <property type="entry name" value="Glyco_hydro_2_C"/>
    <property type="match status" value="1"/>
</dbReference>
<dbReference type="Pfam" id="PF02837">
    <property type="entry name" value="Glyco_hydro_2_N"/>
    <property type="match status" value="1"/>
</dbReference>
<dbReference type="SUPFAM" id="SSF51445">
    <property type="entry name" value="(Trans)glycosidases"/>
    <property type="match status" value="1"/>
</dbReference>
<dbReference type="SUPFAM" id="SSF49303">
    <property type="entry name" value="beta-Galactosidase/glucuronidase domain"/>
    <property type="match status" value="1"/>
</dbReference>
<dbReference type="SUPFAM" id="SSF49785">
    <property type="entry name" value="Galactose-binding domain-like"/>
    <property type="match status" value="1"/>
</dbReference>
<protein>
    <recommendedName>
        <fullName evidence="3">Beta-glucuronidase</fullName>
        <ecNumber evidence="1">3.2.1.31</ecNumber>
    </recommendedName>
    <alternativeName>
        <fullName evidence="3">Glycosyl hydrolase 2 family protein P17</fullName>
        <shortName evidence="2">P17_GH2</shortName>
    </alternativeName>
    <alternativeName>
        <fullName evidence="2">Polysaccharide utilization locus H protein P17</fullName>
        <shortName>PUL H protein P17</shortName>
    </alternativeName>
</protein>
<name>PLH17_FORAG</name>
<reference key="1">
    <citation type="journal article" date="2013" name="Appl. Environ. Microbiol.">
        <title>The genome of the alga-associated marine flavobacterium Formosa agariphila KMM 3901T reveals a broad potential for degradation of algal polysaccharides.</title>
        <authorList>
            <person name="Mann A.J."/>
            <person name="Hahnke R.L."/>
            <person name="Huang S."/>
            <person name="Werner J."/>
            <person name="Xing P."/>
            <person name="Barbeyron T."/>
            <person name="Huettel B."/>
            <person name="Stueber K."/>
            <person name="Reinhardt R."/>
            <person name="Harder J."/>
            <person name="Gloeckner F.O."/>
            <person name="Amann R.I."/>
            <person name="Teeling H."/>
        </authorList>
    </citation>
    <scope>NUCLEOTIDE SEQUENCE [LARGE SCALE GENOMIC DNA]</scope>
    <source>
        <strain>DSM 15362 / KCTC 12365 / LMG 23005 / KMM 3901 / M-2Alg 35-1</strain>
    </source>
</reference>
<reference key="2">
    <citation type="journal article" date="2019" name="Nat. Chem. Biol.">
        <title>A marine bacterial enzymatic cascade degrades the algal polysaccharide ulvan.</title>
        <authorList>
            <person name="Reisky L."/>
            <person name="Prechoux A."/>
            <person name="Zuehlke M.K."/>
            <person name="Baeumgen M."/>
            <person name="Robb C.S."/>
            <person name="Gerlach N."/>
            <person name="Roret T."/>
            <person name="Stanetty C."/>
            <person name="Larocque R."/>
            <person name="Michel G."/>
            <person name="Song T."/>
            <person name="Markert S."/>
            <person name="Unfried F."/>
            <person name="Mihovilovic M.D."/>
            <person name="Trautwein-Schult A."/>
            <person name="Becher D."/>
            <person name="Schweder T."/>
            <person name="Bornscheuer U.T."/>
            <person name="Hehemann J.H."/>
        </authorList>
    </citation>
    <scope>X-RAY CRYSTALLOGRAPHY (2.43 ANGSTROMS) IN COMPLEX WITH MAGNESIUM ION</scope>
    <scope>FUNCTION</scope>
    <scope>SUBCELLULAR LOCATION</scope>
    <scope>INDUCTION</scope>
</reference>
<organism>
    <name type="scientific">Formosa agariphila (strain DSM 15362 / KCTC 12365 / LMG 23005 / KMM 3901 / M-2Alg 35-1)</name>
    <dbReference type="NCBI Taxonomy" id="1347342"/>
    <lineage>
        <taxon>Bacteria</taxon>
        <taxon>Pseudomonadati</taxon>
        <taxon>Bacteroidota</taxon>
        <taxon>Flavobacteriia</taxon>
        <taxon>Flavobacteriales</taxon>
        <taxon>Flavobacteriaceae</taxon>
        <taxon>Formosa</taxon>
    </lineage>
</organism>
<accession>T2KN75</accession>
<feature type="chain" id="PRO_0000448301" description="Beta-glucuronidase">
    <location>
        <begin position="1"/>
        <end position="981"/>
    </location>
</feature>
<feature type="active site" description="Nucleophile" evidence="4">
    <location>
        <position position="500"/>
    </location>
</feature>
<feature type="binding site" evidence="1">
    <location>
        <position position="561"/>
    </location>
    <ligand>
        <name>Mg(2+)</name>
        <dbReference type="ChEBI" id="CHEBI:18420"/>
    </ligand>
</feature>
<feature type="binding site" evidence="1">
    <location>
        <position position="562"/>
    </location>
    <ligand>
        <name>Mg(2+)</name>
        <dbReference type="ChEBI" id="CHEBI:18420"/>
    </ligand>
</feature>
<feature type="binding site" evidence="1">
    <location>
        <position position="563"/>
    </location>
    <ligand>
        <name>Mg(2+)</name>
        <dbReference type="ChEBI" id="CHEBI:18420"/>
    </ligand>
</feature>
<feature type="binding site" evidence="1">
    <location>
        <position position="581"/>
    </location>
    <ligand>
        <name>Mg(2+)</name>
        <dbReference type="ChEBI" id="CHEBI:18420"/>
    </ligand>
</feature>
<feature type="binding site" evidence="1">
    <location>
        <position position="583"/>
    </location>
    <ligand>
        <name>Mg(2+)</name>
        <dbReference type="ChEBI" id="CHEBI:18420"/>
    </ligand>
</feature>
<feature type="strand" evidence="5">
    <location>
        <begin position="27"/>
        <end position="30"/>
    </location>
</feature>
<feature type="strand" evidence="5">
    <location>
        <begin position="33"/>
        <end position="40"/>
    </location>
</feature>
<feature type="turn" evidence="5">
    <location>
        <begin position="43"/>
        <end position="46"/>
    </location>
</feature>
<feature type="strand" evidence="5">
    <location>
        <begin position="55"/>
        <end position="58"/>
    </location>
</feature>
<feature type="strand" evidence="5">
    <location>
        <begin position="66"/>
        <end position="70"/>
    </location>
</feature>
<feature type="strand" evidence="5">
    <location>
        <begin position="87"/>
        <end position="95"/>
    </location>
</feature>
<feature type="helix" evidence="5">
    <location>
        <begin position="99"/>
        <end position="103"/>
    </location>
</feature>
<feature type="strand" evidence="5">
    <location>
        <begin position="105"/>
        <end position="111"/>
    </location>
</feature>
<feature type="strand" evidence="5">
    <location>
        <begin position="114"/>
        <end position="121"/>
    </location>
</feature>
<feature type="strand" evidence="5">
    <location>
        <begin position="124"/>
        <end position="129"/>
    </location>
</feature>
<feature type="strand" evidence="5">
    <location>
        <begin position="132"/>
        <end position="134"/>
    </location>
</feature>
<feature type="strand" evidence="5">
    <location>
        <begin position="136"/>
        <end position="139"/>
    </location>
</feature>
<feature type="helix" evidence="5">
    <location>
        <begin position="141"/>
        <end position="143"/>
    </location>
</feature>
<feature type="strand" evidence="5">
    <location>
        <begin position="150"/>
        <end position="157"/>
    </location>
</feature>
<feature type="turn" evidence="5">
    <location>
        <begin position="175"/>
        <end position="177"/>
    </location>
</feature>
<feature type="strand" evidence="5">
    <location>
        <begin position="188"/>
        <end position="193"/>
    </location>
</feature>
<feature type="strand" evidence="5">
    <location>
        <begin position="195"/>
        <end position="198"/>
    </location>
</feature>
<feature type="helix" evidence="5">
    <location>
        <begin position="203"/>
        <end position="206"/>
    </location>
</feature>
<feature type="strand" evidence="5">
    <location>
        <begin position="211"/>
        <end position="217"/>
    </location>
</feature>
<feature type="strand" evidence="5">
    <location>
        <begin position="220"/>
        <end position="233"/>
    </location>
</feature>
<feature type="strand" evidence="5">
    <location>
        <begin position="235"/>
        <end position="237"/>
    </location>
</feature>
<feature type="strand" evidence="5">
    <location>
        <begin position="239"/>
        <end position="248"/>
    </location>
</feature>
<feature type="strand" evidence="5">
    <location>
        <begin position="254"/>
        <end position="264"/>
    </location>
</feature>
<feature type="strand" evidence="5">
    <location>
        <begin position="269"/>
        <end position="280"/>
    </location>
</feature>
<feature type="strand" evidence="5">
    <location>
        <begin position="286"/>
        <end position="289"/>
    </location>
</feature>
<feature type="strand" evidence="5">
    <location>
        <begin position="292"/>
        <end position="302"/>
    </location>
</feature>
<feature type="strand" evidence="5">
    <location>
        <begin position="304"/>
        <end position="312"/>
    </location>
</feature>
<feature type="strand" evidence="5">
    <location>
        <begin position="317"/>
        <end position="320"/>
    </location>
</feature>
<feature type="turn" evidence="5">
    <location>
        <begin position="321"/>
        <end position="323"/>
    </location>
</feature>
<feature type="strand" evidence="5">
    <location>
        <begin position="324"/>
        <end position="327"/>
    </location>
</feature>
<feature type="strand" evidence="5">
    <location>
        <begin position="334"/>
        <end position="339"/>
    </location>
</feature>
<feature type="turn" evidence="5">
    <location>
        <begin position="346"/>
        <end position="348"/>
    </location>
</feature>
<feature type="helix" evidence="5">
    <location>
        <begin position="354"/>
        <end position="366"/>
    </location>
</feature>
<feature type="strand" evidence="5">
    <location>
        <begin position="371"/>
        <end position="377"/>
    </location>
</feature>
<feature type="helix" evidence="5">
    <location>
        <begin position="381"/>
        <end position="390"/>
    </location>
</feature>
<feature type="strand" evidence="5">
    <location>
        <begin position="393"/>
        <end position="396"/>
    </location>
</feature>
<feature type="helix" evidence="5">
    <location>
        <begin position="407"/>
        <end position="424"/>
    </location>
</feature>
<feature type="strand" evidence="5">
    <location>
        <begin position="430"/>
        <end position="438"/>
    </location>
</feature>
<feature type="helix" evidence="5">
    <location>
        <begin position="442"/>
        <end position="455"/>
    </location>
</feature>
<feature type="strand" evidence="5">
    <location>
        <begin position="462"/>
        <end position="466"/>
    </location>
</feature>
<feature type="helix" evidence="5">
    <location>
        <begin position="468"/>
        <end position="470"/>
    </location>
</feature>
<feature type="helix" evidence="5">
    <location>
        <begin position="472"/>
        <end position="474"/>
    </location>
</feature>
<feature type="turn" evidence="5">
    <location>
        <begin position="475"/>
        <end position="477"/>
    </location>
</feature>
<feature type="strand" evidence="5">
    <location>
        <begin position="479"/>
        <end position="484"/>
    </location>
</feature>
<feature type="strand" evidence="5">
    <location>
        <begin position="496"/>
        <end position="501"/>
    </location>
</feature>
<feature type="helix" evidence="5">
    <location>
        <begin position="526"/>
        <end position="528"/>
    </location>
</feature>
<feature type="helix" evidence="5">
    <location>
        <begin position="535"/>
        <end position="549"/>
    </location>
</feature>
<feature type="turn" evidence="5">
    <location>
        <begin position="550"/>
        <end position="552"/>
    </location>
</feature>
<feature type="strand" evidence="5">
    <location>
        <begin position="558"/>
        <end position="562"/>
    </location>
</feature>
<feature type="strand" evidence="5">
    <location>
        <begin position="567"/>
        <end position="570"/>
    </location>
</feature>
<feature type="strand" evidence="5">
    <location>
        <begin position="576"/>
        <end position="579"/>
    </location>
</feature>
<feature type="strand" evidence="5">
    <location>
        <begin position="582"/>
        <end position="584"/>
    </location>
</feature>
<feature type="helix" evidence="5">
    <location>
        <begin position="592"/>
        <end position="601"/>
    </location>
</feature>
<feature type="strand" evidence="5">
    <location>
        <begin position="602"/>
        <end position="604"/>
    </location>
</feature>
<feature type="strand" evidence="5">
    <location>
        <begin position="607"/>
        <end position="609"/>
    </location>
</feature>
<feature type="strand" evidence="5">
    <location>
        <begin position="620"/>
        <end position="636"/>
    </location>
</feature>
<feature type="strand" evidence="5">
    <location>
        <begin position="639"/>
        <end position="644"/>
    </location>
</feature>
<feature type="turn" evidence="5">
    <location>
        <begin position="649"/>
        <end position="651"/>
    </location>
</feature>
<feature type="strand" evidence="5">
    <location>
        <begin position="652"/>
        <end position="659"/>
    </location>
</feature>
<feature type="strand" evidence="5">
    <location>
        <begin position="662"/>
        <end position="671"/>
    </location>
</feature>
<feature type="strand" evidence="5">
    <location>
        <begin position="674"/>
        <end position="682"/>
    </location>
</feature>
<feature type="strand" evidence="5">
    <location>
        <begin position="687"/>
        <end position="695"/>
    </location>
</feature>
<feature type="strand" evidence="5">
    <location>
        <begin position="704"/>
        <end position="706"/>
    </location>
</feature>
<feature type="strand" evidence="5">
    <location>
        <begin position="708"/>
        <end position="717"/>
    </location>
</feature>
<feature type="strand" evidence="5">
    <location>
        <begin position="728"/>
        <end position="740"/>
    </location>
</feature>
<feature type="strand" evidence="5">
    <location>
        <begin position="755"/>
        <end position="760"/>
    </location>
</feature>
<feature type="strand" evidence="5">
    <location>
        <begin position="763"/>
        <end position="770"/>
    </location>
</feature>
<feature type="strand" evidence="5">
    <location>
        <begin position="775"/>
        <end position="782"/>
    </location>
</feature>
<feature type="strand" evidence="5">
    <location>
        <begin position="789"/>
        <end position="796"/>
    </location>
</feature>
<feature type="strand" evidence="5">
    <location>
        <begin position="841"/>
        <end position="847"/>
    </location>
</feature>
<feature type="strand" evidence="5">
    <location>
        <begin position="849"/>
        <end position="851"/>
    </location>
</feature>
<feature type="strand" evidence="5">
    <location>
        <begin position="854"/>
        <end position="856"/>
    </location>
</feature>
<feature type="strand" evidence="5">
    <location>
        <begin position="864"/>
        <end position="869"/>
    </location>
</feature>
<feature type="helix" evidence="5">
    <location>
        <begin position="878"/>
        <end position="880"/>
    </location>
</feature>
<feature type="strand" evidence="5">
    <location>
        <begin position="884"/>
        <end position="888"/>
    </location>
</feature>
<feature type="helix" evidence="5">
    <location>
        <begin position="890"/>
        <end position="892"/>
    </location>
</feature>
<feature type="strand" evidence="5">
    <location>
        <begin position="900"/>
        <end position="916"/>
    </location>
</feature>
<feature type="helix" evidence="5">
    <location>
        <begin position="923"/>
        <end position="928"/>
    </location>
</feature>
<feature type="strand" evidence="5">
    <location>
        <begin position="930"/>
        <end position="938"/>
    </location>
</feature>
<feature type="strand" evidence="5">
    <location>
        <begin position="941"/>
        <end position="950"/>
    </location>
</feature>
<feature type="strand" evidence="5">
    <location>
        <begin position="955"/>
        <end position="958"/>
    </location>
</feature>
<feature type="strand" evidence="5">
    <location>
        <begin position="961"/>
        <end position="964"/>
    </location>
</feature>
<feature type="strand" evidence="5">
    <location>
        <begin position="974"/>
        <end position="979"/>
    </location>
</feature>